<gene>
    <name evidence="1" type="primary">lpxH</name>
    <name type="ordered locus">PFL_3915</name>
</gene>
<name>LPXH_PSEF5</name>
<protein>
    <recommendedName>
        <fullName evidence="1">UDP-2,3-diacylglucosamine hydrolase</fullName>
        <ecNumber evidence="1">3.6.1.54</ecNumber>
    </recommendedName>
    <alternativeName>
        <fullName evidence="1">UDP-2,3-diacylglucosamine diphosphatase</fullName>
    </alternativeName>
</protein>
<reference key="1">
    <citation type="journal article" date="2005" name="Nat. Biotechnol.">
        <title>Complete genome sequence of the plant commensal Pseudomonas fluorescens Pf-5.</title>
        <authorList>
            <person name="Paulsen I.T."/>
            <person name="Press C.M."/>
            <person name="Ravel J."/>
            <person name="Kobayashi D.Y."/>
            <person name="Myers G.S.A."/>
            <person name="Mavrodi D.V."/>
            <person name="DeBoy R.T."/>
            <person name="Seshadri R."/>
            <person name="Ren Q."/>
            <person name="Madupu R."/>
            <person name="Dodson R.J."/>
            <person name="Durkin A.S."/>
            <person name="Brinkac L.M."/>
            <person name="Daugherty S.C."/>
            <person name="Sullivan S.A."/>
            <person name="Rosovitz M.J."/>
            <person name="Gwinn M.L."/>
            <person name="Zhou L."/>
            <person name="Schneider D.J."/>
            <person name="Cartinhour S.W."/>
            <person name="Nelson W.C."/>
            <person name="Weidman J."/>
            <person name="Watkins K."/>
            <person name="Tran K."/>
            <person name="Khouri H."/>
            <person name="Pierson E.A."/>
            <person name="Pierson L.S. III"/>
            <person name="Thomashow L.S."/>
            <person name="Loper J.E."/>
        </authorList>
    </citation>
    <scope>NUCLEOTIDE SEQUENCE [LARGE SCALE GENOMIC DNA]</scope>
    <source>
        <strain>ATCC BAA-477 / NRRL B-23932 / Pf-5</strain>
    </source>
</reference>
<sequence>MILLISDLHLEEERPDITRAFLELLGGRARAAEALYILGDFFEVWIGDDAMTPYQLSICQALRELSDSGTQIFLMHGNRDFMLGKAFCKAAGATLLKDPSVVDFYGEPVLLMHGDSLCTRDEAYMRMRRYLRNPLSLWILRHLPLGTRRKLARKLRNESRAQTRMKANDIVDVTPDQVPQVMQEHGVRTLVHGHTHRPAIHKLQIGEQAAKRIVLGDWDRQGWALQVDEQGFQLAAFDFVPTQLALPGSP</sequence>
<evidence type="ECO:0000255" key="1">
    <source>
        <dbReference type="HAMAP-Rule" id="MF_00575"/>
    </source>
</evidence>
<comment type="function">
    <text evidence="1">Hydrolyzes the pyrophosphate bond of UDP-2,3-diacylglucosamine to yield 2,3-diacylglucosamine 1-phosphate (lipid X) and UMP by catalyzing the attack of water at the alpha-P atom. Involved in the biosynthesis of lipid A, a phosphorylated glycolipid that anchors the lipopolysaccharide to the outer membrane of the cell.</text>
</comment>
<comment type="catalytic activity">
    <reaction evidence="1">
        <text>UDP-2-N,3-O-bis[(3R)-3-hydroxytetradecanoyl]-alpha-D-glucosamine + H2O = 2-N,3-O-bis[(3R)-3-hydroxytetradecanoyl]-alpha-D-glucosaminyl 1-phosphate + UMP + 2 H(+)</text>
        <dbReference type="Rhea" id="RHEA:25213"/>
        <dbReference type="ChEBI" id="CHEBI:15377"/>
        <dbReference type="ChEBI" id="CHEBI:15378"/>
        <dbReference type="ChEBI" id="CHEBI:57865"/>
        <dbReference type="ChEBI" id="CHEBI:57957"/>
        <dbReference type="ChEBI" id="CHEBI:78847"/>
        <dbReference type="EC" id="3.6.1.54"/>
    </reaction>
</comment>
<comment type="cofactor">
    <cofactor evidence="1">
        <name>Mn(2+)</name>
        <dbReference type="ChEBI" id="CHEBI:29035"/>
    </cofactor>
    <text evidence="1">Binds 2 Mn(2+) ions per subunit in a binuclear metal center.</text>
</comment>
<comment type="pathway">
    <text evidence="1">Glycolipid biosynthesis; lipid IV(A) biosynthesis; lipid IV(A) from (3R)-3-hydroxytetradecanoyl-[acyl-carrier-protein] and UDP-N-acetyl-alpha-D-glucosamine: step 4/6.</text>
</comment>
<comment type="subcellular location">
    <subcellularLocation>
        <location evidence="1">Cell inner membrane</location>
        <topology evidence="1">Peripheral membrane protein</topology>
        <orientation evidence="1">Cytoplasmic side</orientation>
    </subcellularLocation>
</comment>
<comment type="similarity">
    <text evidence="1">Belongs to the LpxH family.</text>
</comment>
<dbReference type="EC" id="3.6.1.54" evidence="1"/>
<dbReference type="EMBL" id="CP000076">
    <property type="protein sequence ID" value="AAY93179.1"/>
    <property type="molecule type" value="Genomic_DNA"/>
</dbReference>
<dbReference type="RefSeq" id="WP_011062202.1">
    <property type="nucleotide sequence ID" value="NC_004129.6"/>
</dbReference>
<dbReference type="SMR" id="Q4K9R8"/>
<dbReference type="STRING" id="220664.PFL_3915"/>
<dbReference type="KEGG" id="pfl:PFL_3915"/>
<dbReference type="PATRIC" id="fig|220664.5.peg.4012"/>
<dbReference type="eggNOG" id="COG2908">
    <property type="taxonomic scope" value="Bacteria"/>
</dbReference>
<dbReference type="HOGENOM" id="CLU_074586_0_0_6"/>
<dbReference type="UniPathway" id="UPA00359">
    <property type="reaction ID" value="UER00480"/>
</dbReference>
<dbReference type="Proteomes" id="UP000008540">
    <property type="component" value="Chromosome"/>
</dbReference>
<dbReference type="GO" id="GO:0005737">
    <property type="term" value="C:cytoplasm"/>
    <property type="evidence" value="ECO:0007669"/>
    <property type="project" value="InterPro"/>
</dbReference>
<dbReference type="GO" id="GO:0019897">
    <property type="term" value="C:extrinsic component of plasma membrane"/>
    <property type="evidence" value="ECO:0007669"/>
    <property type="project" value="UniProtKB-UniRule"/>
</dbReference>
<dbReference type="GO" id="GO:0030145">
    <property type="term" value="F:manganese ion binding"/>
    <property type="evidence" value="ECO:0007669"/>
    <property type="project" value="UniProtKB-UniRule"/>
</dbReference>
<dbReference type="GO" id="GO:0008758">
    <property type="term" value="F:UDP-2,3-diacylglucosamine hydrolase activity"/>
    <property type="evidence" value="ECO:0007669"/>
    <property type="project" value="UniProtKB-UniRule"/>
</dbReference>
<dbReference type="GO" id="GO:0009245">
    <property type="term" value="P:lipid A biosynthetic process"/>
    <property type="evidence" value="ECO:0007669"/>
    <property type="project" value="UniProtKB-UniRule"/>
</dbReference>
<dbReference type="CDD" id="cd07398">
    <property type="entry name" value="MPP_YbbF-LpxH"/>
    <property type="match status" value="1"/>
</dbReference>
<dbReference type="Gene3D" id="3.60.21.10">
    <property type="match status" value="1"/>
</dbReference>
<dbReference type="HAMAP" id="MF_00575">
    <property type="entry name" value="LpxH"/>
    <property type="match status" value="1"/>
</dbReference>
<dbReference type="InterPro" id="IPR004843">
    <property type="entry name" value="Calcineurin-like_PHP_ApaH"/>
</dbReference>
<dbReference type="InterPro" id="IPR043461">
    <property type="entry name" value="LpxH-like"/>
</dbReference>
<dbReference type="InterPro" id="IPR029052">
    <property type="entry name" value="Metallo-depent_PP-like"/>
</dbReference>
<dbReference type="InterPro" id="IPR010138">
    <property type="entry name" value="UDP-diacylglucosamine_Hdrlase"/>
</dbReference>
<dbReference type="NCBIfam" id="TIGR01854">
    <property type="entry name" value="lipid_A_lpxH"/>
    <property type="match status" value="1"/>
</dbReference>
<dbReference type="NCBIfam" id="NF003743">
    <property type="entry name" value="PRK05340.1"/>
    <property type="match status" value="1"/>
</dbReference>
<dbReference type="PANTHER" id="PTHR34990:SF1">
    <property type="entry name" value="UDP-2,3-DIACYLGLUCOSAMINE HYDROLASE"/>
    <property type="match status" value="1"/>
</dbReference>
<dbReference type="PANTHER" id="PTHR34990">
    <property type="entry name" value="UDP-2,3-DIACYLGLUCOSAMINE HYDROLASE-RELATED"/>
    <property type="match status" value="1"/>
</dbReference>
<dbReference type="Pfam" id="PF00149">
    <property type="entry name" value="Metallophos"/>
    <property type="match status" value="1"/>
</dbReference>
<dbReference type="SUPFAM" id="SSF56300">
    <property type="entry name" value="Metallo-dependent phosphatases"/>
    <property type="match status" value="1"/>
</dbReference>
<accession>Q4K9R8</accession>
<keyword id="KW-0997">Cell inner membrane</keyword>
<keyword id="KW-1003">Cell membrane</keyword>
<keyword id="KW-0378">Hydrolase</keyword>
<keyword id="KW-0441">Lipid A biosynthesis</keyword>
<keyword id="KW-0444">Lipid biosynthesis</keyword>
<keyword id="KW-0443">Lipid metabolism</keyword>
<keyword id="KW-0464">Manganese</keyword>
<keyword id="KW-0472">Membrane</keyword>
<keyword id="KW-0479">Metal-binding</keyword>
<feature type="chain" id="PRO_1000025071" description="UDP-2,3-diacylglucosamine hydrolase">
    <location>
        <begin position="1"/>
        <end position="250"/>
    </location>
</feature>
<feature type="binding site" evidence="1">
    <location>
        <position position="7"/>
    </location>
    <ligand>
        <name>Mn(2+)</name>
        <dbReference type="ChEBI" id="CHEBI:29035"/>
        <label>1</label>
    </ligand>
</feature>
<feature type="binding site" evidence="1">
    <location>
        <position position="9"/>
    </location>
    <ligand>
        <name>Mn(2+)</name>
        <dbReference type="ChEBI" id="CHEBI:29035"/>
        <label>1</label>
    </ligand>
</feature>
<feature type="binding site" evidence="1">
    <location>
        <position position="40"/>
    </location>
    <ligand>
        <name>Mn(2+)</name>
        <dbReference type="ChEBI" id="CHEBI:29035"/>
        <label>1</label>
    </ligand>
</feature>
<feature type="binding site" evidence="1">
    <location>
        <position position="40"/>
    </location>
    <ligand>
        <name>Mn(2+)</name>
        <dbReference type="ChEBI" id="CHEBI:29035"/>
        <label>2</label>
    </ligand>
</feature>
<feature type="binding site" evidence="1">
    <location>
        <begin position="78"/>
        <end position="79"/>
    </location>
    <ligand>
        <name>substrate</name>
    </ligand>
</feature>
<feature type="binding site" evidence="1">
    <location>
        <position position="78"/>
    </location>
    <ligand>
        <name>Mn(2+)</name>
        <dbReference type="ChEBI" id="CHEBI:29035"/>
        <label>2</label>
    </ligand>
</feature>
<feature type="binding site" evidence="1">
    <location>
        <position position="113"/>
    </location>
    <ligand>
        <name>Mn(2+)</name>
        <dbReference type="ChEBI" id="CHEBI:29035"/>
        <label>2</label>
    </ligand>
</feature>
<feature type="binding site" evidence="1">
    <location>
        <position position="121"/>
    </location>
    <ligand>
        <name>substrate</name>
    </ligand>
</feature>
<feature type="binding site" evidence="1">
    <location>
        <position position="159"/>
    </location>
    <ligand>
        <name>substrate</name>
    </ligand>
</feature>
<feature type="binding site" evidence="1">
    <location>
        <position position="163"/>
    </location>
    <ligand>
        <name>substrate</name>
    </ligand>
</feature>
<feature type="binding site" evidence="1">
    <location>
        <position position="166"/>
    </location>
    <ligand>
        <name>substrate</name>
    </ligand>
</feature>
<feature type="binding site" evidence="1">
    <location>
        <position position="194"/>
    </location>
    <ligand>
        <name>Mn(2+)</name>
        <dbReference type="ChEBI" id="CHEBI:29035"/>
        <label>2</label>
    </ligand>
</feature>
<feature type="binding site" evidence="1">
    <location>
        <position position="194"/>
    </location>
    <ligand>
        <name>substrate</name>
    </ligand>
</feature>
<feature type="binding site" evidence="1">
    <location>
        <position position="196"/>
    </location>
    <ligand>
        <name>Mn(2+)</name>
        <dbReference type="ChEBI" id="CHEBI:29035"/>
        <label>1</label>
    </ligand>
</feature>
<organism>
    <name type="scientific">Pseudomonas fluorescens (strain ATCC BAA-477 / NRRL B-23932 / Pf-5)</name>
    <dbReference type="NCBI Taxonomy" id="220664"/>
    <lineage>
        <taxon>Bacteria</taxon>
        <taxon>Pseudomonadati</taxon>
        <taxon>Pseudomonadota</taxon>
        <taxon>Gammaproteobacteria</taxon>
        <taxon>Pseudomonadales</taxon>
        <taxon>Pseudomonadaceae</taxon>
        <taxon>Pseudomonas</taxon>
    </lineage>
</organism>
<proteinExistence type="inferred from homology"/>